<name>BIOB_ACICJ</name>
<proteinExistence type="inferred from homology"/>
<comment type="function">
    <text evidence="1">Catalyzes the conversion of dethiobiotin (DTB) to biotin by the insertion of a sulfur atom into dethiobiotin via a radical-based mechanism.</text>
</comment>
<comment type="catalytic activity">
    <reaction evidence="1">
        <text>(4R,5S)-dethiobiotin + (sulfur carrier)-SH + 2 reduced [2Fe-2S]-[ferredoxin] + 2 S-adenosyl-L-methionine = (sulfur carrier)-H + biotin + 2 5'-deoxyadenosine + 2 L-methionine + 2 oxidized [2Fe-2S]-[ferredoxin]</text>
        <dbReference type="Rhea" id="RHEA:22060"/>
        <dbReference type="Rhea" id="RHEA-COMP:10000"/>
        <dbReference type="Rhea" id="RHEA-COMP:10001"/>
        <dbReference type="Rhea" id="RHEA-COMP:14737"/>
        <dbReference type="Rhea" id="RHEA-COMP:14739"/>
        <dbReference type="ChEBI" id="CHEBI:17319"/>
        <dbReference type="ChEBI" id="CHEBI:29917"/>
        <dbReference type="ChEBI" id="CHEBI:33737"/>
        <dbReference type="ChEBI" id="CHEBI:33738"/>
        <dbReference type="ChEBI" id="CHEBI:57586"/>
        <dbReference type="ChEBI" id="CHEBI:57844"/>
        <dbReference type="ChEBI" id="CHEBI:59789"/>
        <dbReference type="ChEBI" id="CHEBI:64428"/>
        <dbReference type="ChEBI" id="CHEBI:149473"/>
        <dbReference type="EC" id="2.8.1.6"/>
    </reaction>
</comment>
<comment type="cofactor">
    <cofactor evidence="1">
        <name>[4Fe-4S] cluster</name>
        <dbReference type="ChEBI" id="CHEBI:49883"/>
    </cofactor>
    <text evidence="1">Binds 1 [4Fe-4S] cluster. The cluster is coordinated with 3 cysteines and an exchangeable S-adenosyl-L-methionine.</text>
</comment>
<comment type="cofactor">
    <cofactor evidence="1">
        <name>[2Fe-2S] cluster</name>
        <dbReference type="ChEBI" id="CHEBI:190135"/>
    </cofactor>
    <text evidence="1">Binds 1 [2Fe-2S] cluster. The cluster is coordinated with 3 cysteines and 1 arginine.</text>
</comment>
<comment type="pathway">
    <text evidence="1">Cofactor biosynthesis; biotin biosynthesis; biotin from 7,8-diaminononanoate: step 2/2.</text>
</comment>
<comment type="subunit">
    <text evidence="1">Homodimer.</text>
</comment>
<comment type="similarity">
    <text evidence="1">Belongs to the radical SAM superfamily. Biotin synthase family.</text>
</comment>
<evidence type="ECO:0000255" key="1">
    <source>
        <dbReference type="HAMAP-Rule" id="MF_01694"/>
    </source>
</evidence>
<evidence type="ECO:0000255" key="2">
    <source>
        <dbReference type="PROSITE-ProRule" id="PRU01266"/>
    </source>
</evidence>
<keyword id="KW-0001">2Fe-2S</keyword>
<keyword id="KW-0004">4Fe-4S</keyword>
<keyword id="KW-0093">Biotin biosynthesis</keyword>
<keyword id="KW-0408">Iron</keyword>
<keyword id="KW-0411">Iron-sulfur</keyword>
<keyword id="KW-0479">Metal-binding</keyword>
<keyword id="KW-1185">Reference proteome</keyword>
<keyword id="KW-0949">S-adenosyl-L-methionine</keyword>
<keyword id="KW-0808">Transferase</keyword>
<accession>A5FZN9</accession>
<feature type="chain" id="PRO_0000381176" description="Biotin synthase">
    <location>
        <begin position="1"/>
        <end position="325"/>
    </location>
</feature>
<feature type="domain" description="Radical SAM core" evidence="2">
    <location>
        <begin position="49"/>
        <end position="267"/>
    </location>
</feature>
<feature type="binding site" evidence="1">
    <location>
        <position position="64"/>
    </location>
    <ligand>
        <name>[4Fe-4S] cluster</name>
        <dbReference type="ChEBI" id="CHEBI:49883"/>
        <note>4Fe-4S-S-AdoMet</note>
    </ligand>
</feature>
<feature type="binding site" evidence="1">
    <location>
        <position position="68"/>
    </location>
    <ligand>
        <name>[4Fe-4S] cluster</name>
        <dbReference type="ChEBI" id="CHEBI:49883"/>
        <note>4Fe-4S-S-AdoMet</note>
    </ligand>
</feature>
<feature type="binding site" evidence="1">
    <location>
        <position position="71"/>
    </location>
    <ligand>
        <name>[4Fe-4S] cluster</name>
        <dbReference type="ChEBI" id="CHEBI:49883"/>
        <note>4Fe-4S-S-AdoMet</note>
    </ligand>
</feature>
<feature type="binding site" evidence="1">
    <location>
        <position position="108"/>
    </location>
    <ligand>
        <name>[2Fe-2S] cluster</name>
        <dbReference type="ChEBI" id="CHEBI:190135"/>
    </ligand>
</feature>
<feature type="binding site" evidence="1">
    <location>
        <position position="139"/>
    </location>
    <ligand>
        <name>[2Fe-2S] cluster</name>
        <dbReference type="ChEBI" id="CHEBI:190135"/>
    </ligand>
</feature>
<feature type="binding site" evidence="1">
    <location>
        <position position="199"/>
    </location>
    <ligand>
        <name>[2Fe-2S] cluster</name>
        <dbReference type="ChEBI" id="CHEBI:190135"/>
    </ligand>
</feature>
<feature type="binding site" evidence="1">
    <location>
        <position position="271"/>
    </location>
    <ligand>
        <name>[2Fe-2S] cluster</name>
        <dbReference type="ChEBI" id="CHEBI:190135"/>
    </ligand>
</feature>
<reference key="1">
    <citation type="submission" date="2007-05" db="EMBL/GenBank/DDBJ databases">
        <title>Complete sequence of chromosome of Acidiphilium cryptum JF-5.</title>
        <authorList>
            <consortium name="US DOE Joint Genome Institute"/>
            <person name="Copeland A."/>
            <person name="Lucas S."/>
            <person name="Lapidus A."/>
            <person name="Barry K."/>
            <person name="Detter J.C."/>
            <person name="Glavina del Rio T."/>
            <person name="Hammon N."/>
            <person name="Israni S."/>
            <person name="Dalin E."/>
            <person name="Tice H."/>
            <person name="Pitluck S."/>
            <person name="Sims D."/>
            <person name="Brettin T."/>
            <person name="Bruce D."/>
            <person name="Han C."/>
            <person name="Schmutz J."/>
            <person name="Larimer F."/>
            <person name="Land M."/>
            <person name="Hauser L."/>
            <person name="Kyrpides N."/>
            <person name="Kim E."/>
            <person name="Magnuson T."/>
            <person name="Richardson P."/>
        </authorList>
    </citation>
    <scope>NUCLEOTIDE SEQUENCE [LARGE SCALE GENOMIC DNA]</scope>
    <source>
        <strain>JF-5</strain>
    </source>
</reference>
<protein>
    <recommendedName>
        <fullName evidence="1">Biotin synthase</fullName>
        <ecNumber evidence="1">2.8.1.6</ecNumber>
    </recommendedName>
</protein>
<sequence>MSIALDSSTATAAAAPSPTRARIAALLALPLPELIFQAQTVHRQHFDPTQVQISTLLSIKTGGCPEDCGYCPQSAEFDVGVKASKLMDIAPVLEAARRAKEAGAQRFCMGAAWRSPKDHDLDRVAAMVEGVKALGMETCVTLGMLRPDQAARLKSAGLDYYNHNLDTSPEFYGSIITTRTYQDRLDTLAAVRDAGINICCGGIIGMGEDLDDRAGLLATLADLDPPPESVPINALVAVKGTKLGESAPIDPIDFVRTIAAARISMPRSWVRLSAGREALSDEAQALCFLAGANSIFYGDTLLTTANPAVARDNALFDRLGMTKLS</sequence>
<dbReference type="EC" id="2.8.1.6" evidence="1"/>
<dbReference type="EMBL" id="CP000697">
    <property type="protein sequence ID" value="ABQ31071.1"/>
    <property type="molecule type" value="Genomic_DNA"/>
</dbReference>
<dbReference type="RefSeq" id="WP_012039684.1">
    <property type="nucleotide sequence ID" value="NC_009484.1"/>
</dbReference>
<dbReference type="SMR" id="A5FZN9"/>
<dbReference type="STRING" id="349163.Acry_1869"/>
<dbReference type="KEGG" id="acr:Acry_1869"/>
<dbReference type="eggNOG" id="COG0502">
    <property type="taxonomic scope" value="Bacteria"/>
</dbReference>
<dbReference type="HOGENOM" id="CLU_033172_1_2_5"/>
<dbReference type="UniPathway" id="UPA00078">
    <property type="reaction ID" value="UER00162"/>
</dbReference>
<dbReference type="Proteomes" id="UP000000245">
    <property type="component" value="Chromosome"/>
</dbReference>
<dbReference type="GO" id="GO:0051537">
    <property type="term" value="F:2 iron, 2 sulfur cluster binding"/>
    <property type="evidence" value="ECO:0007669"/>
    <property type="project" value="UniProtKB-KW"/>
</dbReference>
<dbReference type="GO" id="GO:0051539">
    <property type="term" value="F:4 iron, 4 sulfur cluster binding"/>
    <property type="evidence" value="ECO:0007669"/>
    <property type="project" value="UniProtKB-KW"/>
</dbReference>
<dbReference type="GO" id="GO:0004076">
    <property type="term" value="F:biotin synthase activity"/>
    <property type="evidence" value="ECO:0007669"/>
    <property type="project" value="UniProtKB-UniRule"/>
</dbReference>
<dbReference type="GO" id="GO:0005506">
    <property type="term" value="F:iron ion binding"/>
    <property type="evidence" value="ECO:0007669"/>
    <property type="project" value="UniProtKB-UniRule"/>
</dbReference>
<dbReference type="GO" id="GO:0009102">
    <property type="term" value="P:biotin biosynthetic process"/>
    <property type="evidence" value="ECO:0007669"/>
    <property type="project" value="UniProtKB-UniRule"/>
</dbReference>
<dbReference type="CDD" id="cd01335">
    <property type="entry name" value="Radical_SAM"/>
    <property type="match status" value="1"/>
</dbReference>
<dbReference type="FunFam" id="3.20.20.70:FF:000011">
    <property type="entry name" value="Biotin synthase"/>
    <property type="match status" value="1"/>
</dbReference>
<dbReference type="Gene3D" id="3.20.20.70">
    <property type="entry name" value="Aldolase class I"/>
    <property type="match status" value="1"/>
</dbReference>
<dbReference type="HAMAP" id="MF_01694">
    <property type="entry name" value="BioB"/>
    <property type="match status" value="1"/>
</dbReference>
<dbReference type="InterPro" id="IPR013785">
    <property type="entry name" value="Aldolase_TIM"/>
</dbReference>
<dbReference type="InterPro" id="IPR010722">
    <property type="entry name" value="BATS_dom"/>
</dbReference>
<dbReference type="InterPro" id="IPR002684">
    <property type="entry name" value="Biotin_synth/BioAB"/>
</dbReference>
<dbReference type="InterPro" id="IPR024177">
    <property type="entry name" value="Biotin_synthase"/>
</dbReference>
<dbReference type="InterPro" id="IPR006638">
    <property type="entry name" value="Elp3/MiaA/NifB-like_rSAM"/>
</dbReference>
<dbReference type="InterPro" id="IPR007197">
    <property type="entry name" value="rSAM"/>
</dbReference>
<dbReference type="NCBIfam" id="TIGR00433">
    <property type="entry name" value="bioB"/>
    <property type="match status" value="1"/>
</dbReference>
<dbReference type="PANTHER" id="PTHR22976">
    <property type="entry name" value="BIOTIN SYNTHASE"/>
    <property type="match status" value="1"/>
</dbReference>
<dbReference type="PANTHER" id="PTHR22976:SF2">
    <property type="entry name" value="BIOTIN SYNTHASE, MITOCHONDRIAL"/>
    <property type="match status" value="1"/>
</dbReference>
<dbReference type="Pfam" id="PF06968">
    <property type="entry name" value="BATS"/>
    <property type="match status" value="1"/>
</dbReference>
<dbReference type="Pfam" id="PF04055">
    <property type="entry name" value="Radical_SAM"/>
    <property type="match status" value="1"/>
</dbReference>
<dbReference type="PIRSF" id="PIRSF001619">
    <property type="entry name" value="Biotin_synth"/>
    <property type="match status" value="1"/>
</dbReference>
<dbReference type="SFLD" id="SFLDG01060">
    <property type="entry name" value="BATS_domain_containing"/>
    <property type="match status" value="1"/>
</dbReference>
<dbReference type="SFLD" id="SFLDF00272">
    <property type="entry name" value="biotin_synthase"/>
    <property type="match status" value="1"/>
</dbReference>
<dbReference type="SMART" id="SM00876">
    <property type="entry name" value="BATS"/>
    <property type="match status" value="1"/>
</dbReference>
<dbReference type="SMART" id="SM00729">
    <property type="entry name" value="Elp3"/>
    <property type="match status" value="1"/>
</dbReference>
<dbReference type="SUPFAM" id="SSF102114">
    <property type="entry name" value="Radical SAM enzymes"/>
    <property type="match status" value="1"/>
</dbReference>
<dbReference type="PROSITE" id="PS51918">
    <property type="entry name" value="RADICAL_SAM"/>
    <property type="match status" value="1"/>
</dbReference>
<organism>
    <name type="scientific">Acidiphilium cryptum (strain JF-5)</name>
    <dbReference type="NCBI Taxonomy" id="349163"/>
    <lineage>
        <taxon>Bacteria</taxon>
        <taxon>Pseudomonadati</taxon>
        <taxon>Pseudomonadota</taxon>
        <taxon>Alphaproteobacteria</taxon>
        <taxon>Acetobacterales</taxon>
        <taxon>Acidocellaceae</taxon>
        <taxon>Acidiphilium</taxon>
    </lineage>
</organism>
<gene>
    <name evidence="1" type="primary">bioB</name>
    <name type="ordered locus">Acry_1869</name>
</gene>